<accession>B7HQT4</accession>
<keyword id="KW-0687">Ribonucleoprotein</keyword>
<keyword id="KW-0689">Ribosomal protein</keyword>
<evidence type="ECO:0000255" key="1">
    <source>
        <dbReference type="HAMAP-Rule" id="MF_00368"/>
    </source>
</evidence>
<evidence type="ECO:0000305" key="2"/>
<reference key="1">
    <citation type="submission" date="2008-10" db="EMBL/GenBank/DDBJ databases">
        <title>Genome sequence of Bacillus cereus AH187.</title>
        <authorList>
            <person name="Dodson R.J."/>
            <person name="Durkin A.S."/>
            <person name="Rosovitz M.J."/>
            <person name="Rasko D.A."/>
            <person name="Kolsto A.B."/>
            <person name="Okstad O.A."/>
            <person name="Ravel J."/>
            <person name="Sutton G."/>
        </authorList>
    </citation>
    <scope>NUCLEOTIDE SEQUENCE [LARGE SCALE GENOMIC DNA]</scope>
    <source>
        <strain>AH187</strain>
    </source>
</reference>
<protein>
    <recommendedName>
        <fullName evidence="1">Large ribosomal subunit protein bL12</fullName>
    </recommendedName>
    <alternativeName>
        <fullName evidence="2">50S ribosomal protein L7/L12</fullName>
    </alternativeName>
</protein>
<feature type="chain" id="PRO_1000121391" description="Large ribosomal subunit protein bL12">
    <location>
        <begin position="1"/>
        <end position="119"/>
    </location>
</feature>
<dbReference type="EMBL" id="CP001177">
    <property type="protein sequence ID" value="ACJ80742.1"/>
    <property type="molecule type" value="Genomic_DNA"/>
</dbReference>
<dbReference type="SMR" id="B7HQT4"/>
<dbReference type="KEGG" id="bcr:BCAH187_A0131"/>
<dbReference type="HOGENOM" id="CLU_086499_3_2_9"/>
<dbReference type="Proteomes" id="UP000002214">
    <property type="component" value="Chromosome"/>
</dbReference>
<dbReference type="GO" id="GO:0022625">
    <property type="term" value="C:cytosolic large ribosomal subunit"/>
    <property type="evidence" value="ECO:0007669"/>
    <property type="project" value="TreeGrafter"/>
</dbReference>
<dbReference type="GO" id="GO:0003729">
    <property type="term" value="F:mRNA binding"/>
    <property type="evidence" value="ECO:0007669"/>
    <property type="project" value="TreeGrafter"/>
</dbReference>
<dbReference type="GO" id="GO:0003735">
    <property type="term" value="F:structural constituent of ribosome"/>
    <property type="evidence" value="ECO:0007669"/>
    <property type="project" value="InterPro"/>
</dbReference>
<dbReference type="GO" id="GO:0006412">
    <property type="term" value="P:translation"/>
    <property type="evidence" value="ECO:0007669"/>
    <property type="project" value="UniProtKB-UniRule"/>
</dbReference>
<dbReference type="CDD" id="cd00387">
    <property type="entry name" value="Ribosomal_L7_L12"/>
    <property type="match status" value="1"/>
</dbReference>
<dbReference type="FunFam" id="1.20.5.710:FF:000002">
    <property type="entry name" value="50S ribosomal protein L7/L12"/>
    <property type="match status" value="1"/>
</dbReference>
<dbReference type="FunFam" id="3.30.1390.10:FF:000001">
    <property type="entry name" value="50S ribosomal protein L7/L12"/>
    <property type="match status" value="1"/>
</dbReference>
<dbReference type="Gene3D" id="3.30.1390.10">
    <property type="match status" value="1"/>
</dbReference>
<dbReference type="Gene3D" id="1.20.5.710">
    <property type="entry name" value="Single helix bin"/>
    <property type="match status" value="1"/>
</dbReference>
<dbReference type="HAMAP" id="MF_00368">
    <property type="entry name" value="Ribosomal_bL12"/>
    <property type="match status" value="1"/>
</dbReference>
<dbReference type="InterPro" id="IPR000206">
    <property type="entry name" value="Ribosomal_bL12"/>
</dbReference>
<dbReference type="InterPro" id="IPR013823">
    <property type="entry name" value="Ribosomal_bL12_C"/>
</dbReference>
<dbReference type="InterPro" id="IPR014719">
    <property type="entry name" value="Ribosomal_bL12_C/ClpS-like"/>
</dbReference>
<dbReference type="InterPro" id="IPR008932">
    <property type="entry name" value="Ribosomal_bL12_oligo"/>
</dbReference>
<dbReference type="InterPro" id="IPR036235">
    <property type="entry name" value="Ribosomal_bL12_oligo_N_sf"/>
</dbReference>
<dbReference type="NCBIfam" id="TIGR00855">
    <property type="entry name" value="L12"/>
    <property type="match status" value="1"/>
</dbReference>
<dbReference type="PANTHER" id="PTHR45987">
    <property type="entry name" value="39S RIBOSOMAL PROTEIN L12"/>
    <property type="match status" value="1"/>
</dbReference>
<dbReference type="PANTHER" id="PTHR45987:SF4">
    <property type="entry name" value="LARGE RIBOSOMAL SUBUNIT PROTEIN BL12M"/>
    <property type="match status" value="1"/>
</dbReference>
<dbReference type="Pfam" id="PF00542">
    <property type="entry name" value="Ribosomal_L12"/>
    <property type="match status" value="1"/>
</dbReference>
<dbReference type="Pfam" id="PF16320">
    <property type="entry name" value="Ribosomal_L12_N"/>
    <property type="match status" value="1"/>
</dbReference>
<dbReference type="SUPFAM" id="SSF54736">
    <property type="entry name" value="ClpS-like"/>
    <property type="match status" value="1"/>
</dbReference>
<dbReference type="SUPFAM" id="SSF48300">
    <property type="entry name" value="Ribosomal protein L7/12, oligomerisation (N-terminal) domain"/>
    <property type="match status" value="1"/>
</dbReference>
<name>RL7_BACC7</name>
<comment type="function">
    <text evidence="1">Forms part of the ribosomal stalk which helps the ribosome interact with GTP-bound translation factors. Is thus essential for accurate translation.</text>
</comment>
<comment type="subunit">
    <text evidence="1">Homodimer. Part of the ribosomal stalk of the 50S ribosomal subunit. Forms a multimeric L10(L12)X complex, where L10 forms an elongated spine to which 2 to 4 L12 dimers bind in a sequential fashion. Binds GTP-bound translation factors.</text>
</comment>
<comment type="similarity">
    <text evidence="1">Belongs to the bacterial ribosomal protein bL12 family.</text>
</comment>
<gene>
    <name evidence="1" type="primary">rplL</name>
    <name type="ordered locus">BCAH187_A0131</name>
</gene>
<organism>
    <name type="scientific">Bacillus cereus (strain AH187)</name>
    <dbReference type="NCBI Taxonomy" id="405534"/>
    <lineage>
        <taxon>Bacteria</taxon>
        <taxon>Bacillati</taxon>
        <taxon>Bacillota</taxon>
        <taxon>Bacilli</taxon>
        <taxon>Bacillales</taxon>
        <taxon>Bacillaceae</taxon>
        <taxon>Bacillus</taxon>
        <taxon>Bacillus cereus group</taxon>
    </lineage>
</organism>
<sequence>MTKEQIIEAVKSMTVLELNDLVKAIEEEFGVTAAAPVAVAGGAGEAAAEKTEFDVELTSAGAQKIKVIKVVREITGLGLKEAKELVDNTPKVIKEAAAKEEAEEIKAKLEEVGAAVEVK</sequence>
<proteinExistence type="inferred from homology"/>